<keyword id="KW-0903">Direct protein sequencing</keyword>
<keyword id="KW-0328">Glycosyltransferase</keyword>
<keyword id="KW-0808">Transferase</keyword>
<reference evidence="4" key="1">
    <citation type="submission" date="2007-01" db="UniProtKB">
        <title>Purification and characterization of glucansucrase from Leuconostoc mesentriodes AA1.</title>
        <authorList>
            <person name="Aman A."/>
            <person name="Ul Qader S.A."/>
            <person name="Azhar A."/>
            <person name="Syed M.N."/>
        </authorList>
    </citation>
    <scope>PROTEIN SEQUENCE</scope>
    <scope>FUNCTION</scope>
    <scope>CATALYTIC ACTIVITY</scope>
    <scope>BIOPHYSICOCHEMICAL PROPERTIES</scope>
    <source>
        <strain evidence="2">AA1</strain>
    </source>
</reference>
<evidence type="ECO:0000255" key="1"/>
<evidence type="ECO:0000269" key="2">
    <source ref="1"/>
</evidence>
<evidence type="ECO:0000303" key="3">
    <source ref="1"/>
</evidence>
<evidence type="ECO:0000305" key="4"/>
<organism>
    <name type="scientific">Leuconostoc mesenteroides</name>
    <dbReference type="NCBI Taxonomy" id="1245"/>
    <lineage>
        <taxon>Bacteria</taxon>
        <taxon>Bacillati</taxon>
        <taxon>Bacillota</taxon>
        <taxon>Bacilli</taxon>
        <taxon>Lactobacillales</taxon>
        <taxon>Lactobacillaceae</taxon>
        <taxon>Leuconostoc</taxon>
    </lineage>
</organism>
<comment type="function">
    <text evidence="2">Involved in the production of dextran, an extracellular glucan polymer.</text>
</comment>
<comment type="catalytic activity">
    <reaction evidence="2">
        <text>[(1-&gt;6)-alpha-D-glucosyl](n) + sucrose = [(1-&gt;6)-alpha-D-glucosyl](n+1) + D-fructose</text>
        <dbReference type="Rhea" id="RHEA:18825"/>
        <dbReference type="Rhea" id="RHEA-COMP:11144"/>
        <dbReference type="Rhea" id="RHEA-COMP:11145"/>
        <dbReference type="ChEBI" id="CHEBI:17992"/>
        <dbReference type="ChEBI" id="CHEBI:18269"/>
        <dbReference type="ChEBI" id="CHEBI:37721"/>
        <dbReference type="EC" id="2.4.1.5"/>
    </reaction>
</comment>
<comment type="biophysicochemical properties">
    <kinetics>
        <KM evidence="2">69.88 mM for sucrose</KM>
    </kinetics>
    <phDependence>
        <text evidence="2">Optimum pH is 5.0.</text>
    </phDependence>
    <temperatureDependence>
        <text evidence="2">Optimum temperature is 35 degrees Celsius.</text>
    </temperatureDependence>
</comment>
<comment type="miscellaneous">
    <text evidence="2">Synthesizes water-soluble glucans (alpha 1,6-glucose).</text>
</comment>
<comment type="similarity">
    <text evidence="1">Belongs to the glycosyl hydrolase 70 family.</text>
</comment>
<name>GTF3_LEUME</name>
<accession>P85080</accession>
<proteinExistence type="evidence at protein level"/>
<feature type="chain" id="PRO_0000284553" description="Dextransucrase">
    <location>
        <begin position="1"/>
        <end position="6" status="greater than"/>
    </location>
</feature>
<feature type="non-terminal residue" evidence="3">
    <location>
        <position position="6"/>
    </location>
</feature>
<sequence>DSTNTV</sequence>
<protein>
    <recommendedName>
        <fullName>Dextransucrase</fullName>
        <ecNumber>2.4.1.5</ecNumber>
    </recommendedName>
    <alternativeName>
        <fullName>Glucansucrase</fullName>
    </alternativeName>
    <alternativeName>
        <fullName>Sucrose 6-glucosyltransferase</fullName>
    </alternativeName>
</protein>
<dbReference type="EC" id="2.4.1.5"/>
<dbReference type="BRENDA" id="2.4.1.5">
    <property type="organism ID" value="839"/>
</dbReference>
<dbReference type="GO" id="GO:0047849">
    <property type="term" value="F:dextransucrase activity"/>
    <property type="evidence" value="ECO:0007669"/>
    <property type="project" value="UniProtKB-EC"/>
</dbReference>